<comment type="catalytic activity">
    <reaction>
        <text>kanamycin A + ATP = kanamycin 3'-phosphate + ADP + H(+)</text>
        <dbReference type="Rhea" id="RHEA:24256"/>
        <dbReference type="ChEBI" id="CHEBI:15378"/>
        <dbReference type="ChEBI" id="CHEBI:30616"/>
        <dbReference type="ChEBI" id="CHEBI:57909"/>
        <dbReference type="ChEBI" id="CHEBI:58214"/>
        <dbReference type="ChEBI" id="CHEBI:456216"/>
        <dbReference type="EC" id="2.7.1.95"/>
    </reaction>
</comment>
<comment type="similarity">
    <text evidence="2">Belongs to the aminoglycoside phosphotransferase family.</text>
</comment>
<sequence length="262" mass="30721">MTNLKELRINIEKFPEALHNTLKDAKIYDSSSSPEAQVLFIDKKDGYYLKIASSKTLEREAEMTAYFQKKKLGLGYISYLSDQSQDFLLKKKIQGENYLAKQYLNNPKRLCDNLAENLRFLHEQNFEDCPILDHSERYLKKVEKNASINNSNLDFVNNYNIRTIEEAYDYIENKKLLLRNDTLLHGDYCLPNIILDNWKFKGFIDLDCAGVGDRHIDLFWGAWTLNFNIGTDQYRDRFFDAYGRDRIDVDRLKLVGCCEVFG</sequence>
<feature type="chain" id="PRO_0000204813" description="Probable aminoglycoside 3'-phosphotransferase">
    <location>
        <begin position="1"/>
        <end position="262"/>
    </location>
</feature>
<feature type="active site" description="Proton acceptor" evidence="1">
    <location>
        <position position="187"/>
    </location>
</feature>
<feature type="sequence conflict" description="In Ref. 1; AAB81906." evidence="2" ref="1">
    <original>I</original>
    <variation>T</variation>
    <location>
        <position position="164"/>
    </location>
</feature>
<proteinExistence type="inferred from homology"/>
<name>KKIH_LACLA</name>
<organism>
    <name type="scientific">Lactococcus lactis subsp. lactis (strain IL1403)</name>
    <name type="common">Streptococcus lactis</name>
    <dbReference type="NCBI Taxonomy" id="272623"/>
    <lineage>
        <taxon>Bacteria</taxon>
        <taxon>Bacillati</taxon>
        <taxon>Bacillota</taxon>
        <taxon>Bacilli</taxon>
        <taxon>Lactobacillales</taxon>
        <taxon>Streptococcaceae</taxon>
        <taxon>Lactococcus</taxon>
    </lineage>
</organism>
<accession>Q02149</accession>
<reference key="1">
    <citation type="journal article" date="1992" name="J. Bacteriol.">
        <title>Histidine biosynthesis genes in Lactococcus lactis subsp. lactis.</title>
        <authorList>
            <person name="Delorme C."/>
            <person name="Ehrlich S.D."/>
            <person name="Renault P."/>
        </authorList>
    </citation>
    <scope>NUCLEOTIDE SEQUENCE [GENOMIC DNA]</scope>
    <source>
        <strain>NCDO 2118</strain>
    </source>
</reference>
<reference key="2">
    <citation type="journal article" date="1993" name="J. Bacteriol.">
        <title>Gene inactivation in Lactococcus lactis: histidine biosynthesis.</title>
        <authorList>
            <person name="Delorme C."/>
            <person name="Godon J.-J."/>
            <person name="Ehrlich S.D."/>
            <person name="Renault P."/>
        </authorList>
    </citation>
    <scope>NUCLEOTIDE SEQUENCE [GENOMIC DNA]</scope>
    <source>
        <strain>IL1403</strain>
    </source>
</reference>
<reference key="3">
    <citation type="journal article" date="2001" name="Genome Res.">
        <title>The complete genome sequence of the lactic acid bacterium Lactococcus lactis ssp. lactis IL1403.</title>
        <authorList>
            <person name="Bolotin A."/>
            <person name="Wincker P."/>
            <person name="Mauger S."/>
            <person name="Jaillon O."/>
            <person name="Malarme K."/>
            <person name="Weissenbach J."/>
            <person name="Ehrlich S.D."/>
            <person name="Sorokin A."/>
        </authorList>
    </citation>
    <scope>NUCLEOTIDE SEQUENCE [LARGE SCALE GENOMIC DNA]</scope>
    <source>
        <strain>IL1403</strain>
    </source>
</reference>
<protein>
    <recommendedName>
        <fullName>Probable aminoglycoside 3'-phosphotransferase</fullName>
        <ecNumber>2.7.1.95</ecNumber>
    </recommendedName>
    <alternativeName>
        <fullName>Kanamycin kinase</fullName>
    </alternativeName>
</protein>
<gene>
    <name type="primary">ymdC</name>
    <name type="ordered locus">LL1211</name>
    <name type="ORF">L33782</name>
</gene>
<keyword id="KW-0046">Antibiotic resistance</keyword>
<keyword id="KW-0067">ATP-binding</keyword>
<keyword id="KW-0418">Kinase</keyword>
<keyword id="KW-0547">Nucleotide-binding</keyword>
<keyword id="KW-1185">Reference proteome</keyword>
<keyword id="KW-0808">Transferase</keyword>
<dbReference type="EC" id="2.7.1.95"/>
<dbReference type="EMBL" id="U92974">
    <property type="protein sequence ID" value="AAB81906.1"/>
    <property type="molecule type" value="Genomic_DNA"/>
</dbReference>
<dbReference type="EMBL" id="AE005176">
    <property type="protein sequence ID" value="AAK05309.1"/>
    <property type="molecule type" value="Genomic_DNA"/>
</dbReference>
<dbReference type="PIR" id="C86776">
    <property type="entry name" value="C86776"/>
</dbReference>
<dbReference type="PIR" id="H45734">
    <property type="entry name" value="H45734"/>
</dbReference>
<dbReference type="RefSeq" id="NP_267367.1">
    <property type="nucleotide sequence ID" value="NC_002662.1"/>
</dbReference>
<dbReference type="RefSeq" id="WP_010905831.1">
    <property type="nucleotide sequence ID" value="NC_002662.1"/>
</dbReference>
<dbReference type="SMR" id="Q02149"/>
<dbReference type="PaxDb" id="272623-L33782"/>
<dbReference type="EnsemblBacteria" id="AAK05309">
    <property type="protein sequence ID" value="AAK05309"/>
    <property type="gene ID" value="L33782"/>
</dbReference>
<dbReference type="KEGG" id="lla:L33782"/>
<dbReference type="PATRIC" id="fig|272623.7.peg.1308"/>
<dbReference type="eggNOG" id="COG3231">
    <property type="taxonomic scope" value="Bacteria"/>
</dbReference>
<dbReference type="HOGENOM" id="CLU_073027_1_0_9"/>
<dbReference type="OrthoDB" id="3806873at2"/>
<dbReference type="Proteomes" id="UP000002196">
    <property type="component" value="Chromosome"/>
</dbReference>
<dbReference type="GO" id="GO:0005524">
    <property type="term" value="F:ATP binding"/>
    <property type="evidence" value="ECO:0007669"/>
    <property type="project" value="UniProtKB-KW"/>
</dbReference>
<dbReference type="GO" id="GO:0008910">
    <property type="term" value="F:kanamycin kinase activity"/>
    <property type="evidence" value="ECO:0007669"/>
    <property type="project" value="UniProtKB-EC"/>
</dbReference>
<dbReference type="GO" id="GO:0046677">
    <property type="term" value="P:response to antibiotic"/>
    <property type="evidence" value="ECO:0007669"/>
    <property type="project" value="UniProtKB-KW"/>
</dbReference>
<dbReference type="CDD" id="cd05150">
    <property type="entry name" value="APH"/>
    <property type="match status" value="1"/>
</dbReference>
<dbReference type="Gene3D" id="3.90.1200.10">
    <property type="match status" value="1"/>
</dbReference>
<dbReference type="InterPro" id="IPR002575">
    <property type="entry name" value="Aminoglycoside_PTrfase"/>
</dbReference>
<dbReference type="InterPro" id="IPR024165">
    <property type="entry name" value="Kan/Strep_kinase"/>
</dbReference>
<dbReference type="InterPro" id="IPR011009">
    <property type="entry name" value="Kinase-like_dom_sf"/>
</dbReference>
<dbReference type="Pfam" id="PF01636">
    <property type="entry name" value="APH"/>
    <property type="match status" value="1"/>
</dbReference>
<dbReference type="PIRSF" id="PIRSF000706">
    <property type="entry name" value="Kanamycin_kin"/>
    <property type="match status" value="1"/>
</dbReference>
<dbReference type="SUPFAM" id="SSF56112">
    <property type="entry name" value="Protein kinase-like (PK-like)"/>
    <property type="match status" value="1"/>
</dbReference>
<evidence type="ECO:0000250" key="1"/>
<evidence type="ECO:0000305" key="2"/>